<dbReference type="EC" id="2.3.1.286" evidence="1"/>
<dbReference type="EMBL" id="BA000037">
    <property type="protein sequence ID" value="BAC94455.1"/>
    <property type="molecule type" value="Genomic_DNA"/>
</dbReference>
<dbReference type="RefSeq" id="WP_011150284.1">
    <property type="nucleotide sequence ID" value="NC_005139.1"/>
</dbReference>
<dbReference type="SMR" id="Q7MKT7"/>
<dbReference type="STRING" id="672.VV93_v1c15810"/>
<dbReference type="GeneID" id="93896850"/>
<dbReference type="KEGG" id="vvy:VV1691"/>
<dbReference type="PATRIC" id="fig|196600.6.peg.1666"/>
<dbReference type="eggNOG" id="COG0846">
    <property type="taxonomic scope" value="Bacteria"/>
</dbReference>
<dbReference type="HOGENOM" id="CLU_023643_3_1_6"/>
<dbReference type="Proteomes" id="UP000002675">
    <property type="component" value="Chromosome I"/>
</dbReference>
<dbReference type="GO" id="GO:0005737">
    <property type="term" value="C:cytoplasm"/>
    <property type="evidence" value="ECO:0007669"/>
    <property type="project" value="UniProtKB-SubCell"/>
</dbReference>
<dbReference type="GO" id="GO:0017136">
    <property type="term" value="F:histone deacetylase activity, NAD-dependent"/>
    <property type="evidence" value="ECO:0007669"/>
    <property type="project" value="TreeGrafter"/>
</dbReference>
<dbReference type="GO" id="GO:0070403">
    <property type="term" value="F:NAD+ binding"/>
    <property type="evidence" value="ECO:0007669"/>
    <property type="project" value="UniProtKB-UniRule"/>
</dbReference>
<dbReference type="GO" id="GO:0036054">
    <property type="term" value="F:protein-malonyllysine demalonylase activity"/>
    <property type="evidence" value="ECO:0007669"/>
    <property type="project" value="InterPro"/>
</dbReference>
<dbReference type="GO" id="GO:0036055">
    <property type="term" value="F:protein-succinyllysine desuccinylase activity"/>
    <property type="evidence" value="ECO:0007669"/>
    <property type="project" value="UniProtKB-UniRule"/>
</dbReference>
<dbReference type="GO" id="GO:0008270">
    <property type="term" value="F:zinc ion binding"/>
    <property type="evidence" value="ECO:0007669"/>
    <property type="project" value="UniProtKB-UniRule"/>
</dbReference>
<dbReference type="CDD" id="cd01412">
    <property type="entry name" value="SIRT5_Af1_CobB"/>
    <property type="match status" value="1"/>
</dbReference>
<dbReference type="Gene3D" id="3.30.1600.10">
    <property type="entry name" value="SIR2/SIRT2 'Small Domain"/>
    <property type="match status" value="1"/>
</dbReference>
<dbReference type="Gene3D" id="3.40.50.1220">
    <property type="entry name" value="TPP-binding domain"/>
    <property type="match status" value="1"/>
</dbReference>
<dbReference type="HAMAP" id="MF_01121">
    <property type="entry name" value="Sirtuin_ClassIII"/>
    <property type="match status" value="1"/>
</dbReference>
<dbReference type="InterPro" id="IPR029035">
    <property type="entry name" value="DHS-like_NAD/FAD-binding_dom"/>
</dbReference>
<dbReference type="InterPro" id="IPR050134">
    <property type="entry name" value="NAD-dep_sirtuin_deacylases"/>
</dbReference>
<dbReference type="InterPro" id="IPR003000">
    <property type="entry name" value="Sirtuin"/>
</dbReference>
<dbReference type="InterPro" id="IPR026591">
    <property type="entry name" value="Sirtuin_cat_small_dom_sf"/>
</dbReference>
<dbReference type="InterPro" id="IPR027546">
    <property type="entry name" value="Sirtuin_class_III"/>
</dbReference>
<dbReference type="InterPro" id="IPR026590">
    <property type="entry name" value="Ssirtuin_cat_dom"/>
</dbReference>
<dbReference type="NCBIfam" id="NF001755">
    <property type="entry name" value="PRK00481.1-5"/>
    <property type="match status" value="1"/>
</dbReference>
<dbReference type="PANTHER" id="PTHR11085:SF4">
    <property type="entry name" value="NAD-DEPENDENT PROTEIN DEACYLASE"/>
    <property type="match status" value="1"/>
</dbReference>
<dbReference type="PANTHER" id="PTHR11085">
    <property type="entry name" value="NAD-DEPENDENT PROTEIN DEACYLASE SIRTUIN-5, MITOCHONDRIAL-RELATED"/>
    <property type="match status" value="1"/>
</dbReference>
<dbReference type="Pfam" id="PF02146">
    <property type="entry name" value="SIR2"/>
    <property type="match status" value="1"/>
</dbReference>
<dbReference type="SUPFAM" id="SSF52467">
    <property type="entry name" value="DHS-like NAD/FAD-binding domain"/>
    <property type="match status" value="1"/>
</dbReference>
<dbReference type="PROSITE" id="PS50305">
    <property type="entry name" value="SIRTUIN"/>
    <property type="match status" value="1"/>
</dbReference>
<feature type="chain" id="PRO_0000110371" description="NAD-dependent protein deacylase">
    <location>
        <begin position="1"/>
        <end position="245"/>
    </location>
</feature>
<feature type="domain" description="Deacetylase sirtuin-type" evidence="2">
    <location>
        <begin position="1"/>
        <end position="237"/>
    </location>
</feature>
<feature type="active site" description="Proton acceptor" evidence="1">
    <location>
        <position position="112"/>
    </location>
</feature>
<feature type="binding site" evidence="1">
    <location>
        <begin position="13"/>
        <end position="32"/>
    </location>
    <ligand>
        <name>NAD(+)</name>
        <dbReference type="ChEBI" id="CHEBI:57540"/>
    </ligand>
</feature>
<feature type="binding site" evidence="1">
    <location>
        <position position="57"/>
    </location>
    <ligand>
        <name>substrate</name>
    </ligand>
</feature>
<feature type="binding site" evidence="1">
    <location>
        <position position="60"/>
    </location>
    <ligand>
        <name>substrate</name>
    </ligand>
</feature>
<feature type="binding site" evidence="1">
    <location>
        <begin position="94"/>
        <end position="97"/>
    </location>
    <ligand>
        <name>NAD(+)</name>
        <dbReference type="ChEBI" id="CHEBI:57540"/>
    </ligand>
</feature>
<feature type="binding site" evidence="1">
    <location>
        <position position="120"/>
    </location>
    <ligand>
        <name>Zn(2+)</name>
        <dbReference type="ChEBI" id="CHEBI:29105"/>
    </ligand>
</feature>
<feature type="binding site" evidence="1">
    <location>
        <position position="139"/>
    </location>
    <ligand>
        <name>Zn(2+)</name>
        <dbReference type="ChEBI" id="CHEBI:29105"/>
    </ligand>
</feature>
<feature type="binding site" evidence="1">
    <location>
        <begin position="179"/>
        <end position="181"/>
    </location>
    <ligand>
        <name>NAD(+)</name>
        <dbReference type="ChEBI" id="CHEBI:57540"/>
    </ligand>
</feature>
<feature type="binding site" evidence="1">
    <location>
        <begin position="205"/>
        <end position="207"/>
    </location>
    <ligand>
        <name>NAD(+)</name>
        <dbReference type="ChEBI" id="CHEBI:57540"/>
    </ligand>
</feature>
<feature type="binding site" evidence="1">
    <location>
        <position position="223"/>
    </location>
    <ligand>
        <name>NAD(+)</name>
        <dbReference type="ChEBI" id="CHEBI:57540"/>
    </ligand>
</feature>
<gene>
    <name evidence="1" type="primary">cobB</name>
    <name type="ordered locus">VV1691</name>
</gene>
<keyword id="KW-0963">Cytoplasm</keyword>
<keyword id="KW-0479">Metal-binding</keyword>
<keyword id="KW-0520">NAD</keyword>
<keyword id="KW-0808">Transferase</keyword>
<keyword id="KW-0862">Zinc</keyword>
<protein>
    <recommendedName>
        <fullName evidence="1">NAD-dependent protein deacylase</fullName>
        <ecNumber evidence="1">2.3.1.286</ecNumber>
    </recommendedName>
    <alternativeName>
        <fullName evidence="1">Regulatory protein SIR2 homolog</fullName>
    </alternativeName>
</protein>
<accession>Q7MKT7</accession>
<organism>
    <name type="scientific">Vibrio vulnificus (strain YJ016)</name>
    <dbReference type="NCBI Taxonomy" id="196600"/>
    <lineage>
        <taxon>Bacteria</taxon>
        <taxon>Pseudomonadati</taxon>
        <taxon>Pseudomonadota</taxon>
        <taxon>Gammaproteobacteria</taxon>
        <taxon>Vibrionales</taxon>
        <taxon>Vibrionaceae</taxon>
        <taxon>Vibrio</taxon>
    </lineage>
</organism>
<sequence length="245" mass="27212">MNFPYRNIVVLTGAGISAESGIQTFRAQDGLWENHRIEDVATPEGFARDPDLVQDFYNQRRKKLQDPNIEPNAAHLALGRLEAELDGQVTIVTQNIDNLHERGGNKNIIHMHGELLKSRCSVSNQVIEETGDILTGDLCHCCQMPSQMRPHVVWFGEMPLRMGEIYSALETADLFISIGTSGVVYPAAGFVHDAKMHGAHTIEINLEPSAIESEFVEKRYGKASVEVPKLVEELLAHLESNVENA</sequence>
<reference key="1">
    <citation type="journal article" date="2003" name="Genome Res.">
        <title>Comparative genome analysis of Vibrio vulnificus, a marine pathogen.</title>
        <authorList>
            <person name="Chen C.-Y."/>
            <person name="Wu K.-M."/>
            <person name="Chang Y.-C."/>
            <person name="Chang C.-H."/>
            <person name="Tsai H.-C."/>
            <person name="Liao T.-L."/>
            <person name="Liu Y.-M."/>
            <person name="Chen H.-J."/>
            <person name="Shen A.B.-T."/>
            <person name="Li J.-C."/>
            <person name="Su T.-L."/>
            <person name="Shao C.-P."/>
            <person name="Lee C.-T."/>
            <person name="Hor L.-I."/>
            <person name="Tsai S.-F."/>
        </authorList>
    </citation>
    <scope>NUCLEOTIDE SEQUENCE [LARGE SCALE GENOMIC DNA]</scope>
    <source>
        <strain>YJ016</strain>
    </source>
</reference>
<evidence type="ECO:0000255" key="1">
    <source>
        <dbReference type="HAMAP-Rule" id="MF_01121"/>
    </source>
</evidence>
<evidence type="ECO:0000255" key="2">
    <source>
        <dbReference type="PROSITE-ProRule" id="PRU00236"/>
    </source>
</evidence>
<comment type="function">
    <text evidence="1">NAD-dependent lysine deacetylase and desuccinylase that specifically removes acetyl and succinyl groups on target proteins. Modulates the activities of several proteins which are inactive in their acylated form.</text>
</comment>
<comment type="catalytic activity">
    <reaction evidence="1">
        <text>N(6)-acetyl-L-lysyl-[protein] + NAD(+) + H2O = 2''-O-acetyl-ADP-D-ribose + nicotinamide + L-lysyl-[protein]</text>
        <dbReference type="Rhea" id="RHEA:43636"/>
        <dbReference type="Rhea" id="RHEA-COMP:9752"/>
        <dbReference type="Rhea" id="RHEA-COMP:10731"/>
        <dbReference type="ChEBI" id="CHEBI:15377"/>
        <dbReference type="ChEBI" id="CHEBI:17154"/>
        <dbReference type="ChEBI" id="CHEBI:29969"/>
        <dbReference type="ChEBI" id="CHEBI:57540"/>
        <dbReference type="ChEBI" id="CHEBI:61930"/>
        <dbReference type="ChEBI" id="CHEBI:83767"/>
        <dbReference type="EC" id="2.3.1.286"/>
    </reaction>
</comment>
<comment type="catalytic activity">
    <reaction evidence="1">
        <text>N(6)-succinyl-L-lysyl-[protein] + NAD(+) + H2O = 2''-O-succinyl-ADP-D-ribose + nicotinamide + L-lysyl-[protein]</text>
        <dbReference type="Rhea" id="RHEA:47668"/>
        <dbReference type="Rhea" id="RHEA-COMP:9752"/>
        <dbReference type="Rhea" id="RHEA-COMP:11877"/>
        <dbReference type="ChEBI" id="CHEBI:15377"/>
        <dbReference type="ChEBI" id="CHEBI:17154"/>
        <dbReference type="ChEBI" id="CHEBI:29969"/>
        <dbReference type="ChEBI" id="CHEBI:57540"/>
        <dbReference type="ChEBI" id="CHEBI:87830"/>
        <dbReference type="ChEBI" id="CHEBI:87832"/>
    </reaction>
</comment>
<comment type="cofactor">
    <cofactor evidence="1">
        <name>Zn(2+)</name>
        <dbReference type="ChEBI" id="CHEBI:29105"/>
    </cofactor>
    <text evidence="1">Binds 1 zinc ion per subunit.</text>
</comment>
<comment type="subcellular location">
    <subcellularLocation>
        <location evidence="1">Cytoplasm</location>
    </subcellularLocation>
</comment>
<comment type="domain">
    <text evidence="1">2 residues (Tyr-57 and Arg-60) present in a large hydrophobic pocket are probably involved in substrate specificity. They are important for desuccinylation activity, but dispensable for deacetylation activity.</text>
</comment>
<comment type="similarity">
    <text evidence="1">Belongs to the sirtuin family. Class III subfamily.</text>
</comment>
<proteinExistence type="inferred from homology"/>
<name>NPD_VIBVY</name>